<protein>
    <recommendedName>
        <fullName>DNA (cytosine-5)-methyltransferase 3B</fullName>
        <shortName>Dnmt3b</shortName>
        <ecNumber>2.1.1.37</ecNumber>
    </recommendedName>
    <alternativeName>
        <fullName>DNA methyltransferase MmuIIIB</fullName>
        <shortName>DNA MTase MmuIIIB</shortName>
        <shortName>M.MmuIIIB</shortName>
    </alternativeName>
</protein>
<dbReference type="EC" id="2.1.1.37"/>
<dbReference type="EMBL" id="AF068626">
    <property type="protein sequence ID" value="AAC40178.2"/>
    <property type="molecule type" value="mRNA"/>
</dbReference>
<dbReference type="EMBL" id="AF068627">
    <property type="protein sequence ID" value="AAC40179.2"/>
    <property type="molecule type" value="mRNA"/>
</dbReference>
<dbReference type="EMBL" id="AF068628">
    <property type="protein sequence ID" value="AAC40180.2"/>
    <property type="molecule type" value="mRNA"/>
</dbReference>
<dbReference type="EMBL" id="AF151969">
    <property type="protein sequence ID" value="AAF74515.1"/>
    <property type="molecule type" value="mRNA"/>
</dbReference>
<dbReference type="EMBL" id="AF151970">
    <property type="protein sequence ID" value="AAF74516.1"/>
    <property type="molecule type" value="mRNA"/>
</dbReference>
<dbReference type="EMBL" id="AF151971">
    <property type="protein sequence ID" value="AAF74517.1"/>
    <property type="molecule type" value="mRNA"/>
</dbReference>
<dbReference type="EMBL" id="AF151972">
    <property type="protein sequence ID" value="AAF74518.1"/>
    <property type="molecule type" value="mRNA"/>
</dbReference>
<dbReference type="EMBL" id="AF151973">
    <property type="protein sequence ID" value="AAF74519.1"/>
    <property type="molecule type" value="mRNA"/>
</dbReference>
<dbReference type="EMBL" id="AF151974">
    <property type="protein sequence ID" value="AAF74520.1"/>
    <property type="molecule type" value="mRNA"/>
</dbReference>
<dbReference type="EMBL" id="AF151975">
    <property type="protein sequence ID" value="AAF74521.1"/>
    <property type="molecule type" value="mRNA"/>
</dbReference>
<dbReference type="EMBL" id="AF151976">
    <property type="protein sequence ID" value="AAF74522.1"/>
    <property type="molecule type" value="mRNA"/>
</dbReference>
<dbReference type="CCDS" id="CCDS16913.1">
    <molecule id="O88509-2"/>
</dbReference>
<dbReference type="CCDS" id="CCDS16914.1">
    <molecule id="O88509-1"/>
</dbReference>
<dbReference type="CCDS" id="CCDS16915.1">
    <molecule id="O88509-4"/>
</dbReference>
<dbReference type="CCDS" id="CCDS16916.1">
    <molecule id="O88509-3"/>
</dbReference>
<dbReference type="RefSeq" id="NP_001003960.2">
    <molecule id="O88509-2"/>
    <property type="nucleotide sequence ID" value="NM_001003960.5"/>
</dbReference>
<dbReference type="RefSeq" id="NP_001003961.2">
    <molecule id="O88509-1"/>
    <property type="nucleotide sequence ID" value="NM_001003961.5"/>
</dbReference>
<dbReference type="RefSeq" id="NP_001003963.2">
    <molecule id="O88509-4"/>
    <property type="nucleotide sequence ID" value="NM_001003963.5"/>
</dbReference>
<dbReference type="RefSeq" id="NP_001258673.1">
    <molecule id="O88509-1"/>
    <property type="nucleotide sequence ID" value="NM_001271744.2"/>
</dbReference>
<dbReference type="RefSeq" id="NP_001258674.1">
    <molecule id="O88509-2"/>
    <property type="nucleotide sequence ID" value="NM_001271745.2"/>
</dbReference>
<dbReference type="RefSeq" id="NP_001258675.1">
    <molecule id="O88509-4"/>
    <property type="nucleotide sequence ID" value="NM_001271746.2"/>
</dbReference>
<dbReference type="RefSeq" id="NP_001258676.1">
    <molecule id="O88509-3"/>
    <property type="nucleotide sequence ID" value="NM_001271747.2"/>
</dbReference>
<dbReference type="RefSeq" id="NP_001403953.1">
    <molecule id="O88509-3"/>
    <property type="nucleotide sequence ID" value="NM_001417024.1"/>
</dbReference>
<dbReference type="RefSeq" id="NP_034198.3">
    <molecule id="O88509-3"/>
    <property type="nucleotide sequence ID" value="NM_010068.6"/>
</dbReference>
<dbReference type="PDB" id="1KHC">
    <property type="method" value="X-ray"/>
    <property type="resolution" value="1.80 A"/>
    <property type="chains" value="A=219-362"/>
</dbReference>
<dbReference type="PDBsum" id="1KHC"/>
<dbReference type="SMR" id="O88509"/>
<dbReference type="BioGRID" id="199262">
    <property type="interactions" value="11"/>
</dbReference>
<dbReference type="CORUM" id="O88509"/>
<dbReference type="DIP" id="DIP-43736N"/>
<dbReference type="FunCoup" id="O88509">
    <property type="interactions" value="1297"/>
</dbReference>
<dbReference type="IntAct" id="O88509">
    <property type="interactions" value="11"/>
</dbReference>
<dbReference type="MINT" id="O88509"/>
<dbReference type="STRING" id="10090.ENSMUSP00000051830"/>
<dbReference type="BindingDB" id="O88509"/>
<dbReference type="ChEMBL" id="CHEMBL2189115"/>
<dbReference type="REBASE" id="3748">
    <property type="entry name" value="M.MmuDnmt3B"/>
</dbReference>
<dbReference type="iPTMnet" id="O88509"/>
<dbReference type="PhosphoSitePlus" id="O88509"/>
<dbReference type="jPOST" id="O88509"/>
<dbReference type="PaxDb" id="10090-ENSMUSP00000105396"/>
<dbReference type="PeptideAtlas" id="O88509"/>
<dbReference type="ProteomicsDB" id="277365">
    <molecule id="O88509-1"/>
</dbReference>
<dbReference type="ProteomicsDB" id="277366">
    <molecule id="O88509-2"/>
</dbReference>
<dbReference type="ProteomicsDB" id="277367">
    <molecule id="O88509-3"/>
</dbReference>
<dbReference type="ProteomicsDB" id="277368">
    <molecule id="O88509-4"/>
</dbReference>
<dbReference type="DNASU" id="13436"/>
<dbReference type="Ensembl" id="ENSMUST00000072997.10">
    <molecule id="O88509-1"/>
    <property type="protein sequence ID" value="ENSMUSP00000072761.4"/>
    <property type="gene ID" value="ENSMUSG00000027478.16"/>
</dbReference>
<dbReference type="Ensembl" id="ENSMUST00000081628.13">
    <molecule id="O88509-2"/>
    <property type="protein sequence ID" value="ENSMUSP00000080334.7"/>
    <property type="gene ID" value="ENSMUSG00000027478.16"/>
</dbReference>
<dbReference type="Ensembl" id="ENSMUST00000088976.12">
    <molecule id="O88509-4"/>
    <property type="protein sequence ID" value="ENSMUSP00000086370.6"/>
    <property type="gene ID" value="ENSMUSG00000027478.16"/>
</dbReference>
<dbReference type="Ensembl" id="ENSMUST00000103150.10">
    <molecule id="O88509-3"/>
    <property type="protein sequence ID" value="ENSMUSP00000099439.4"/>
    <property type="gene ID" value="ENSMUSG00000027478.16"/>
</dbReference>
<dbReference type="Ensembl" id="ENSMUST00000103151.8">
    <molecule id="O88509-3"/>
    <property type="protein sequence ID" value="ENSMUSP00000099440.2"/>
    <property type="gene ID" value="ENSMUSG00000027478.16"/>
</dbReference>
<dbReference type="Ensembl" id="ENSMUST00000109772.8">
    <molecule id="O88509-4"/>
    <property type="protein sequence ID" value="ENSMUSP00000105394.2"/>
    <property type="gene ID" value="ENSMUSG00000027478.16"/>
</dbReference>
<dbReference type="Ensembl" id="ENSMUST00000109773.8">
    <molecule id="O88509-2"/>
    <property type="protein sequence ID" value="ENSMUSP00000105395.2"/>
    <property type="gene ID" value="ENSMUSG00000027478.16"/>
</dbReference>
<dbReference type="Ensembl" id="ENSMUST00000109774.9">
    <molecule id="O88509-1"/>
    <property type="protein sequence ID" value="ENSMUSP00000105396.3"/>
    <property type="gene ID" value="ENSMUSG00000027478.16"/>
</dbReference>
<dbReference type="GeneID" id="13436"/>
<dbReference type="KEGG" id="mmu:13436"/>
<dbReference type="UCSC" id="uc008nib.3">
    <molecule id="O88509-1"/>
    <property type="organism name" value="mouse"/>
</dbReference>
<dbReference type="UCSC" id="uc008nic.3">
    <molecule id="O88509-2"/>
    <property type="organism name" value="mouse"/>
</dbReference>
<dbReference type="UCSC" id="uc008nie.3">
    <molecule id="O88509-3"/>
    <property type="organism name" value="mouse"/>
</dbReference>
<dbReference type="AGR" id="MGI:1261819"/>
<dbReference type="CTD" id="1789"/>
<dbReference type="MGI" id="MGI:1261819">
    <property type="gene designation" value="Dnmt3b"/>
</dbReference>
<dbReference type="VEuPathDB" id="HostDB:ENSMUSG00000027478"/>
<dbReference type="eggNOG" id="ENOG502QR6U">
    <property type="taxonomic scope" value="Eukaryota"/>
</dbReference>
<dbReference type="GeneTree" id="ENSGT00940000156928"/>
<dbReference type="HOGENOM" id="CLU_006958_9_1_1"/>
<dbReference type="InParanoid" id="O88509"/>
<dbReference type="OMA" id="CLEYSRI"/>
<dbReference type="OrthoDB" id="641149at2759"/>
<dbReference type="TreeFam" id="TF329039"/>
<dbReference type="BRENDA" id="2.1.1.37">
    <property type="organism ID" value="3474"/>
</dbReference>
<dbReference type="Reactome" id="R-MMU-212300">
    <property type="pathway name" value="PRC2 methylates histones and DNA"/>
</dbReference>
<dbReference type="Reactome" id="R-MMU-4655427">
    <property type="pathway name" value="SUMOylation of DNA methylation proteins"/>
</dbReference>
<dbReference type="BioGRID-ORCS" id="13436">
    <property type="hits" value="2 hits in 81 CRISPR screens"/>
</dbReference>
<dbReference type="ChiTaRS" id="Dnmt3b">
    <property type="organism name" value="mouse"/>
</dbReference>
<dbReference type="EvolutionaryTrace" id="O88509"/>
<dbReference type="PRO" id="PR:O88509"/>
<dbReference type="Proteomes" id="UP000000589">
    <property type="component" value="Chromosome 2"/>
</dbReference>
<dbReference type="RNAct" id="O88509">
    <property type="molecule type" value="protein"/>
</dbReference>
<dbReference type="Bgee" id="ENSMUSG00000027478">
    <property type="expression patterns" value="Expressed in epiblast (generic) and 203 other cell types or tissues"/>
</dbReference>
<dbReference type="ExpressionAtlas" id="O88509">
    <property type="expression patterns" value="baseline and differential"/>
</dbReference>
<dbReference type="GO" id="GO:0000775">
    <property type="term" value="C:chromosome, centromeric region"/>
    <property type="evidence" value="ECO:0000314"/>
    <property type="project" value="UniProtKB"/>
</dbReference>
<dbReference type="GO" id="GO:0000792">
    <property type="term" value="C:heterochromatin"/>
    <property type="evidence" value="ECO:0000314"/>
    <property type="project" value="MGI"/>
</dbReference>
<dbReference type="GO" id="GO:0005654">
    <property type="term" value="C:nucleoplasm"/>
    <property type="evidence" value="ECO:0000304"/>
    <property type="project" value="Reactome"/>
</dbReference>
<dbReference type="GO" id="GO:0005634">
    <property type="term" value="C:nucleus"/>
    <property type="evidence" value="ECO:0000314"/>
    <property type="project" value="MGI"/>
</dbReference>
<dbReference type="GO" id="GO:0003886">
    <property type="term" value="F:DNA (cytosine-5-)-methyltransferase activity"/>
    <property type="evidence" value="ECO:0000314"/>
    <property type="project" value="MGI"/>
</dbReference>
<dbReference type="GO" id="GO:0051718">
    <property type="term" value="F:DNA (cytosine-5-)-methyltransferase activity, acting on CpG substrates"/>
    <property type="evidence" value="ECO:0000314"/>
    <property type="project" value="MGI"/>
</dbReference>
<dbReference type="GO" id="GO:0051719">
    <property type="term" value="F:DNA (cytosine-5-)-methyltransferase activity, acting on CpN substrates"/>
    <property type="evidence" value="ECO:0000304"/>
    <property type="project" value="Reactome"/>
</dbReference>
<dbReference type="GO" id="GO:0003677">
    <property type="term" value="F:DNA binding"/>
    <property type="evidence" value="ECO:0000314"/>
    <property type="project" value="MGI"/>
</dbReference>
<dbReference type="GO" id="GO:0106222">
    <property type="term" value="F:lncRNA binding"/>
    <property type="evidence" value="ECO:0000314"/>
    <property type="project" value="MGI"/>
</dbReference>
<dbReference type="GO" id="GO:0008168">
    <property type="term" value="F:methyltransferase activity"/>
    <property type="evidence" value="ECO:0000314"/>
    <property type="project" value="UniProtKB"/>
</dbReference>
<dbReference type="GO" id="GO:0008270">
    <property type="term" value="F:zinc ion binding"/>
    <property type="evidence" value="ECO:0007669"/>
    <property type="project" value="UniProtKB-KW"/>
</dbReference>
<dbReference type="GO" id="GO:0141068">
    <property type="term" value="P:autosome genomic imprinting"/>
    <property type="evidence" value="ECO:0000315"/>
    <property type="project" value="MGI"/>
</dbReference>
<dbReference type="GO" id="GO:0071230">
    <property type="term" value="P:cellular response to amino acid stimulus"/>
    <property type="evidence" value="ECO:0000314"/>
    <property type="project" value="MGI"/>
</dbReference>
<dbReference type="GO" id="GO:0006346">
    <property type="term" value="P:DNA methylation-dependent constitutive heterochromatin formation"/>
    <property type="evidence" value="ECO:0000316"/>
    <property type="project" value="MGI"/>
</dbReference>
<dbReference type="GO" id="GO:0043045">
    <property type="term" value="P:epigenetic programming of gene expression"/>
    <property type="evidence" value="ECO:0000316"/>
    <property type="project" value="MGI"/>
</dbReference>
<dbReference type="GO" id="GO:0040029">
    <property type="term" value="P:epigenetic regulation of gene expression"/>
    <property type="evidence" value="ECO:0000270"/>
    <property type="project" value="UniProtKB"/>
</dbReference>
<dbReference type="GO" id="GO:0141176">
    <property type="term" value="P:gene silencing by piRNA-directed DNA methylation"/>
    <property type="evidence" value="ECO:0000314"/>
    <property type="project" value="MGI"/>
</dbReference>
<dbReference type="GO" id="GO:0031507">
    <property type="term" value="P:heterochromatin formation"/>
    <property type="evidence" value="ECO:0000315"/>
    <property type="project" value="MGI"/>
</dbReference>
<dbReference type="GO" id="GO:0032259">
    <property type="term" value="P:methylation"/>
    <property type="evidence" value="ECO:0007669"/>
    <property type="project" value="UniProtKB-KW"/>
</dbReference>
<dbReference type="GO" id="GO:0045814">
    <property type="term" value="P:negative regulation of gene expression, epigenetic"/>
    <property type="evidence" value="ECO:0000315"/>
    <property type="project" value="UniProtKB"/>
</dbReference>
<dbReference type="GO" id="GO:0000122">
    <property type="term" value="P:negative regulation of transcription by RNA polymerase II"/>
    <property type="evidence" value="ECO:0000315"/>
    <property type="project" value="MGI"/>
</dbReference>
<dbReference type="GO" id="GO:0031503">
    <property type="term" value="P:protein-containing complex localization"/>
    <property type="evidence" value="ECO:0000314"/>
    <property type="project" value="MGI"/>
</dbReference>
<dbReference type="GO" id="GO:0141005">
    <property type="term" value="P:transposable element silencing by heterochromatin formation"/>
    <property type="evidence" value="ECO:0000314"/>
    <property type="project" value="MGI"/>
</dbReference>
<dbReference type="CDD" id="cd11728">
    <property type="entry name" value="ADDz_Dnmt3b"/>
    <property type="match status" value="1"/>
</dbReference>
<dbReference type="CDD" id="cd20155">
    <property type="entry name" value="PWWP_DNMT3B"/>
    <property type="match status" value="1"/>
</dbReference>
<dbReference type="FunFam" id="3.40.50.150:FF:000008">
    <property type="entry name" value="DNA (Cytosine-5)-methyltransferase 3A isoform X1"/>
    <property type="match status" value="1"/>
</dbReference>
<dbReference type="FunFam" id="2.30.30.140:FF:000006">
    <property type="entry name" value="DNA (Cytosine-5)-methyltransferase 3B isoform 3"/>
    <property type="match status" value="1"/>
</dbReference>
<dbReference type="FunFam" id="1.10.720.50:FF:000001">
    <property type="entry name" value="DNA (Cytosine-5)-methyltransferase 3B isoform X2"/>
    <property type="match status" value="1"/>
</dbReference>
<dbReference type="FunFam" id="3.40.50.150:FF:000011">
    <property type="entry name" value="DNA methyltransferase 3 alpha"/>
    <property type="match status" value="1"/>
</dbReference>
<dbReference type="Gene3D" id="2.30.30.140">
    <property type="match status" value="1"/>
</dbReference>
<dbReference type="Gene3D" id="1.10.720.50">
    <property type="entry name" value="PWWP, helical domain"/>
    <property type="match status" value="1"/>
</dbReference>
<dbReference type="Gene3D" id="3.40.50.150">
    <property type="entry name" value="Vaccinia Virus protein VP39"/>
    <property type="match status" value="2"/>
</dbReference>
<dbReference type="IDEAL" id="IID50164"/>
<dbReference type="InterPro" id="IPR025766">
    <property type="entry name" value="ADD"/>
</dbReference>
<dbReference type="InterPro" id="IPR018117">
    <property type="entry name" value="C5_DNA_meth_AS"/>
</dbReference>
<dbReference type="InterPro" id="IPR001525">
    <property type="entry name" value="C5_MeTfrase"/>
</dbReference>
<dbReference type="InterPro" id="IPR040552">
    <property type="entry name" value="DNMT3_ADD_GATA1-like"/>
</dbReference>
<dbReference type="InterPro" id="IPR049554">
    <property type="entry name" value="DNMT3_ADD_PHD"/>
</dbReference>
<dbReference type="InterPro" id="IPR030488">
    <property type="entry name" value="DNMT3B_ADD"/>
</dbReference>
<dbReference type="InterPro" id="IPR000313">
    <property type="entry name" value="PWWP_dom"/>
</dbReference>
<dbReference type="InterPro" id="IPR029063">
    <property type="entry name" value="SAM-dependent_MTases_sf"/>
</dbReference>
<dbReference type="InterPro" id="IPR011011">
    <property type="entry name" value="Znf_FYVE_PHD"/>
</dbReference>
<dbReference type="PANTHER" id="PTHR23068:SF9">
    <property type="entry name" value="DNA (CYTOSINE-5)-METHYLTRANSFERASE 3B"/>
    <property type="match status" value="1"/>
</dbReference>
<dbReference type="PANTHER" id="PTHR23068">
    <property type="entry name" value="DNA CYTOSINE-5- -METHYLTRANSFERASE 3-RELATED"/>
    <property type="match status" value="1"/>
</dbReference>
<dbReference type="Pfam" id="PF17980">
    <property type="entry name" value="ADD_DNMT3"/>
    <property type="match status" value="1"/>
</dbReference>
<dbReference type="Pfam" id="PF00145">
    <property type="entry name" value="DNA_methylase"/>
    <property type="match status" value="1"/>
</dbReference>
<dbReference type="Pfam" id="PF21255">
    <property type="entry name" value="DNMT3_ADD_GATA1-like"/>
    <property type="match status" value="1"/>
</dbReference>
<dbReference type="Pfam" id="PF00855">
    <property type="entry name" value="PWWP"/>
    <property type="match status" value="1"/>
</dbReference>
<dbReference type="SMART" id="SM00293">
    <property type="entry name" value="PWWP"/>
    <property type="match status" value="1"/>
</dbReference>
<dbReference type="SUPFAM" id="SSF57903">
    <property type="entry name" value="FYVE/PHD zinc finger"/>
    <property type="match status" value="1"/>
</dbReference>
<dbReference type="SUPFAM" id="SSF53335">
    <property type="entry name" value="S-adenosyl-L-methionine-dependent methyltransferases"/>
    <property type="match status" value="1"/>
</dbReference>
<dbReference type="SUPFAM" id="SSF63748">
    <property type="entry name" value="Tudor/PWWP/MBT"/>
    <property type="match status" value="1"/>
</dbReference>
<dbReference type="PROSITE" id="PS51533">
    <property type="entry name" value="ADD"/>
    <property type="match status" value="1"/>
</dbReference>
<dbReference type="PROSITE" id="PS00094">
    <property type="entry name" value="C5_MTASE_1"/>
    <property type="match status" value="1"/>
</dbReference>
<dbReference type="PROSITE" id="PS50812">
    <property type="entry name" value="PWWP"/>
    <property type="match status" value="1"/>
</dbReference>
<dbReference type="PROSITE" id="PS51679">
    <property type="entry name" value="SAM_MT_C5"/>
    <property type="match status" value="1"/>
</dbReference>
<keyword id="KW-0002">3D-structure</keyword>
<keyword id="KW-0010">Activator</keyword>
<keyword id="KW-0025">Alternative splicing</keyword>
<keyword id="KW-0164">Citrullination</keyword>
<keyword id="KW-0238">DNA-binding</keyword>
<keyword id="KW-1017">Isopeptide bond</keyword>
<keyword id="KW-0479">Metal-binding</keyword>
<keyword id="KW-0489">Methyltransferase</keyword>
<keyword id="KW-0539">Nucleus</keyword>
<keyword id="KW-0597">Phosphoprotein</keyword>
<keyword id="KW-1185">Reference proteome</keyword>
<keyword id="KW-0678">Repressor</keyword>
<keyword id="KW-0949">S-adenosyl-L-methionine</keyword>
<keyword id="KW-0808">Transferase</keyword>
<keyword id="KW-0832">Ubl conjugation</keyword>
<keyword id="KW-0862">Zinc</keyword>
<keyword id="KW-0863">Zinc-finger</keyword>
<accession>O88509</accession>
<accession>O88510</accession>
<accession>O88511</accession>
<evidence type="ECO:0000250" key="1"/>
<evidence type="ECO:0000250" key="2">
    <source>
        <dbReference type="UniProtKB" id="Q9UBC3"/>
    </source>
</evidence>
<evidence type="ECO:0000250" key="3">
    <source>
        <dbReference type="UniProtKB" id="Q9Y6K1"/>
    </source>
</evidence>
<evidence type="ECO:0000255" key="4">
    <source>
        <dbReference type="PROSITE-ProRule" id="PRU00162"/>
    </source>
</evidence>
<evidence type="ECO:0000255" key="5">
    <source>
        <dbReference type="PROSITE-ProRule" id="PRU00865"/>
    </source>
</evidence>
<evidence type="ECO:0000255" key="6">
    <source>
        <dbReference type="PROSITE-ProRule" id="PRU01016"/>
    </source>
</evidence>
<evidence type="ECO:0000255" key="7">
    <source>
        <dbReference type="PROSITE-ProRule" id="PRU10018"/>
    </source>
</evidence>
<evidence type="ECO:0000256" key="8">
    <source>
        <dbReference type="SAM" id="MobiDB-lite"/>
    </source>
</evidence>
<evidence type="ECO:0000269" key="9">
    <source>
    </source>
</evidence>
<evidence type="ECO:0000269" key="10">
    <source>
    </source>
</evidence>
<evidence type="ECO:0000269" key="11">
    <source>
    </source>
</evidence>
<evidence type="ECO:0000269" key="12">
    <source>
    </source>
</evidence>
<evidence type="ECO:0000269" key="13">
    <source>
    </source>
</evidence>
<evidence type="ECO:0000269" key="14">
    <source>
    </source>
</evidence>
<evidence type="ECO:0000269" key="15">
    <source>
    </source>
</evidence>
<evidence type="ECO:0000269" key="16">
    <source>
    </source>
</evidence>
<evidence type="ECO:0000269" key="17">
    <source>
    </source>
</evidence>
<evidence type="ECO:0000269" key="18">
    <source>
    </source>
</evidence>
<evidence type="ECO:0000269" key="19">
    <source>
    </source>
</evidence>
<evidence type="ECO:0000269" key="20">
    <source>
    </source>
</evidence>
<evidence type="ECO:0000269" key="21">
    <source>
    </source>
</evidence>
<evidence type="ECO:0000269" key="22">
    <source>
    </source>
</evidence>
<evidence type="ECO:0000303" key="23">
    <source>
    </source>
</evidence>
<evidence type="ECO:0000303" key="24">
    <source>
    </source>
</evidence>
<evidence type="ECO:0000305" key="25"/>
<evidence type="ECO:0007829" key="26">
    <source>
        <dbReference type="PDB" id="1KHC"/>
    </source>
</evidence>
<reference key="1">
    <citation type="journal article" date="1998" name="Nat. Genet.">
        <title>Cloning and characterization of a family of novel mammalian DNA (cytosine-5) methyltransferases.</title>
        <authorList>
            <person name="Okano M."/>
            <person name="Xie S."/>
            <person name="Li E."/>
        </authorList>
    </citation>
    <scope>NUCLEOTIDE SEQUENCE [MRNA] (ISOFORMS 1; 2 AND 3)</scope>
</reference>
<reference key="2">
    <citation type="journal article" date="1999" name="Zhongguo Yi Xue Ke Xue Yuan Xue Bao">
        <title>Cloning of full-length Dnmt3b cDNA and its alternative splicing isoforms in mouse embryo.</title>
        <authorList>
            <person name="Yin B."/>
            <person name="Chen Y."/>
            <person name="Zhu N."/>
            <person name="Wu G."/>
            <person name="Shen Y."/>
        </authorList>
    </citation>
    <scope>NUCLEOTIDE SEQUENCE [MRNA] (ISOFORMS 1; 2; 3 AND 4)</scope>
    <source>
        <strain>KM</strain>
        <tissue>Embryo</tissue>
    </source>
</reference>
<reference key="3">
    <citation type="journal article" date="1999" name="Cell">
        <title>DNA methyltransferases Dnmt3a and Dnmt3b are essential for de novo methylation and mammalian development.</title>
        <authorList>
            <person name="Okano M."/>
            <person name="Bell D.W."/>
            <person name="Haber D.A."/>
            <person name="Li E."/>
        </authorList>
    </citation>
    <scope>FUNCTION</scope>
    <scope>DEVELOPMENTAL STAGE</scope>
</reference>
<reference key="4">
    <citation type="journal article" date="2002" name="J. Biol. Chem.">
        <title>Molecular enzymology of the catalytic domains of the Dnmt3a and Dnmt3b DNA methyltransferases.</title>
        <authorList>
            <person name="Gowher H."/>
            <person name="Jeltsch A."/>
        </authorList>
    </citation>
    <scope>FUNCTION</scope>
    <scope>MUTAGENESIS OF ALA-609; GLY-669; LEU-670; VAL-725; ASP-823 AND VAL-824</scope>
</reference>
<reference key="5">
    <citation type="journal article" date="2010" name="Cell">
        <title>A tissue-specific atlas of mouse protein phosphorylation and expression.</title>
        <authorList>
            <person name="Huttlin E.L."/>
            <person name="Jedrychowski M.P."/>
            <person name="Elias J.E."/>
            <person name="Goswami T."/>
            <person name="Rad R."/>
            <person name="Beausoleil S.A."/>
            <person name="Villen J."/>
            <person name="Haas W."/>
            <person name="Sowa M.E."/>
            <person name="Gygi S.P."/>
        </authorList>
    </citation>
    <scope>IDENTIFICATION BY MASS SPECTROMETRY [LARGE SCALE ANALYSIS]</scope>
    <source>
        <tissue>Testis</tissue>
    </source>
</reference>
<reference key="6">
    <citation type="journal article" date="2014" name="Nature">
        <title>Citrullination regulates pluripotency and histone H1 binding to chromatin.</title>
        <authorList>
            <person name="Christophorou M.A."/>
            <person name="Castelo-Branco G."/>
            <person name="Halley-Stott R.P."/>
            <person name="Oliveira C.S."/>
            <person name="Loos R."/>
            <person name="Radzisheuskaya A."/>
            <person name="Mowen K.A."/>
            <person name="Bertone P."/>
            <person name="Silva J.C."/>
            <person name="Zernicka-Goetz M."/>
            <person name="Nielsen M.L."/>
            <person name="Gurdon J.B."/>
            <person name="Kouzarides T."/>
        </authorList>
    </citation>
    <scope>CITRULLINATION AT ARG-415</scope>
</reference>
<reference key="7">
    <citation type="journal article" date="2003" name="Curr. Biol.">
        <title>Suv39h-mediated histone H3 lysine 9 methylation directs DNA methylation to major satellite repeats at pericentric heterochromatin.</title>
        <authorList>
            <person name="Lehnertz B."/>
            <person name="Ueda Y."/>
            <person name="Derijck A.A.H.A."/>
            <person name="Braunschweig U."/>
            <person name="Perez-Burgos L."/>
            <person name="Kubicek S."/>
            <person name="Chen T."/>
            <person name="Li E."/>
            <person name="Jenuwein T."/>
            <person name="Peters A.H.F.M."/>
        </authorList>
    </citation>
    <scope>INTERACTION WITH SUV39H1</scope>
</reference>
<reference key="8">
    <citation type="journal article" date="2005" name="Curr. Biol.">
        <title>The PHD finger/bromodomain of NoRC interacts with acetylated histone H4K16 and is sufficient for rDNA silencing.</title>
        <authorList>
            <person name="Zhou Y."/>
            <person name="Grummt I."/>
        </authorList>
    </citation>
    <scope>INTERACTION WITH BAZ2A</scope>
</reference>
<reference key="9">
    <citation type="journal article" date="2006" name="Nature">
        <title>The Polycomb group protein EZH2 directly controls DNA methylation.</title>
        <authorList>
            <person name="Vire E."/>
            <person name="Brenner C."/>
            <person name="Deplus R."/>
            <person name="Blanchon L."/>
            <person name="Fraga M."/>
            <person name="Didelot C."/>
            <person name="Morey L."/>
            <person name="Van Eynde A."/>
            <person name="Bernard D."/>
            <person name="Vanderwinden J.-M."/>
            <person name="Bollen M."/>
            <person name="Esteller M."/>
            <person name="Di Croce L."/>
            <person name="de Launoit Y."/>
            <person name="Fuks F."/>
        </authorList>
    </citation>
    <scope>INTERACTION WITH EED AND EZH2</scope>
</reference>
<reference key="10">
    <citation type="journal article" date="2006" name="Nature">
        <authorList>
            <person name="Vire E."/>
            <person name="Brenner C."/>
            <person name="Deplus R."/>
            <person name="Blanchon L."/>
            <person name="Fraga M."/>
            <person name="Didelot C."/>
            <person name="Morey L."/>
            <person name="Van Eynde A."/>
            <person name="Bernard D."/>
            <person name="Vanderwinden J.-M."/>
            <person name="Bollen M."/>
            <person name="Esteller M."/>
            <person name="Di Croce L."/>
            <person name="de Launoit Y."/>
            <person name="Fuks F."/>
        </authorList>
    </citation>
    <scope>ERRATUM OF PUBMED:16357870</scope>
</reference>
<reference key="11">
    <citation type="journal article" date="2004" name="Mol. Cell. Biol.">
        <title>The PWWP domain of Dnmt3a and Dnmt3b is required for directing DNA methylation to the major satellite repeats at pericentric heterochromatin.</title>
        <authorList>
            <person name="Chen T."/>
            <person name="Tsujimoto N."/>
            <person name="Li E."/>
        </authorList>
    </citation>
    <scope>SUBCELLULAR LOCATION</scope>
    <scope>MUTAGENESIS OF 236-VAL-TRP-237; SER-277 AND 656-PRO-CYS-657</scope>
</reference>
<reference key="12">
    <citation type="journal article" date="2005" name="J. Biol. Chem.">
        <title>Mechanism of stimulation of catalytic activity of Dnmt3A and Dnmt3B DNA-(cytosine-C5)-methyltransferases by Dnmt3L.</title>
        <authorList>
            <person name="Gowher H."/>
            <person name="Liebert K."/>
            <person name="Hermann A."/>
            <person name="Xu G."/>
            <person name="Jeltsch A."/>
        </authorList>
    </citation>
    <scope>ACTIVITY REGULATION</scope>
</reference>
<reference key="13">
    <citation type="journal article" date="2006" name="J. Biochem.">
        <title>Distinct DNA methylation activity of Dnmt3a and Dnmt3b towards naked and nucleosomal DNA.</title>
        <authorList>
            <person name="Takeshima H."/>
            <person name="Suetake I."/>
            <person name="Shimahara H."/>
            <person name="Ura K."/>
            <person name="Tate S."/>
            <person name="Tajima S."/>
        </authorList>
    </citation>
    <scope>FUNCTION</scope>
</reference>
<reference key="14">
    <citation type="journal article" date="2007" name="Genes Dev.">
        <title>Dnmt3b promotes tumorigenesis in vivo by gene-specific de novo methylation and transcriptional silencing.</title>
        <authorList>
            <person name="Linhart H.G."/>
            <person name="Lin H."/>
            <person name="Yamada Y."/>
            <person name="Moran E."/>
            <person name="Steine E.J."/>
            <person name="Gokhale S."/>
            <person name="Lo G."/>
            <person name="Cantu E."/>
            <person name="Ehrich M."/>
            <person name="He T."/>
            <person name="Meissner A."/>
            <person name="Jaenisch R."/>
        </authorList>
    </citation>
    <scope>FUNCTION</scope>
</reference>
<reference key="15">
    <citation type="journal article" date="2008" name="Int. J. Biochem. Cell Biol.">
        <title>DNA methyltransferase 3B acts as a co-repressor of the human polycomb protein hPc2 to repress fibroblast growth factor receptor 3 transcription.</title>
        <authorList>
            <person name="Kim S.-H."/>
            <person name="Park J."/>
            <person name="Choi M.-C."/>
            <person name="Park J.-H."/>
            <person name="Kim H.-P."/>
            <person name="Lee J.-H."/>
            <person name="Oh D.-Y."/>
            <person name="Im S.-A."/>
            <person name="Bang Y.-J."/>
            <person name="Kim T.-Y."/>
        </authorList>
    </citation>
    <scope>FUNCTION</scope>
    <scope>INTERACTION WITH CBX4</scope>
</reference>
<reference key="16">
    <citation type="journal article" date="2009" name="EMBO Rep.">
        <title>Np95 interacts with de novo DNA methyltransferases, Dnmt3a and Dnmt3b, and mediates epigenetic silencing of the viral CMV promoter in embryonic stem cells.</title>
        <authorList>
            <person name="Meilinger D."/>
            <person name="Fellinger K."/>
            <person name="Bultmann S."/>
            <person name="Rothbauer U."/>
            <person name="Bonapace I.M."/>
            <person name="Klinkert W.E."/>
            <person name="Spada F."/>
            <person name="Leonhardt H."/>
        </authorList>
    </citation>
    <scope>INTERACTION WITH UHRF1</scope>
</reference>
<reference key="17">
    <citation type="journal article" date="2009" name="Gene Expr. Patterns">
        <title>Dynamic transition of Dnmt3b expression in mouse pre- and early post-implantation embryos.</title>
        <authorList>
            <person name="Hirasawa R."/>
            <person name="Sasaki H."/>
        </authorList>
    </citation>
    <scope>DEVELOPMENTAL STAGE</scope>
</reference>
<reference key="18">
    <citation type="journal article" date="2002" name="Nat. Struct. Biol.">
        <title>The PWWP domain of mammalian DNA methyltransferase Dnmt3b defines a new family of DNA-binding folds.</title>
        <authorList>
            <person name="Qiu C."/>
            <person name="Sawada K."/>
            <person name="Zhang X."/>
            <person name="Cheng X."/>
        </authorList>
    </citation>
    <scope>X-RAY CRYSTALLOGRAPHY (1.8 ANGSTROMS) OF 219-362</scope>
    <scope>FUNCTION</scope>
    <scope>INTERACTION WITH DNA</scope>
</reference>
<sequence>MKGDSRHLNEEEGASGYEECIIVNGNFSDQSSDTKDAPSPPVLEAICTEPVCTPETRGRRSSSRLSKREVSSLLNYTQDMTGDGDRDDEVDDGNGSDILMPKLTRETKDTRTRSESPAVRTRHSNGTSSLERQRASPRITRGRQGRHHVQEYPVEFPATRSRRRRASSSASTPWSSPASVDFMEEVTPKSVSTPSVDLSQDGDQEGMDTTQVDAESRDGDSTEYQDDKEFGIGDLVWGKIKGFSWWPAMVVSWKATSKRQAMPGMRWVQWFGDGKFSEISADKLVALGLFSQHFNLATFNKLVSYRKAMYHTLEKARVRAGKTFSSSPGESLEDQLKPMLEWAHGGFKPTGIEGLKPNKKQPVVNKSKVRRSDSRNLEPRRRENKSRRRTTNDSAASESPPPKRLKTNSYGGKDRGEDEESRERMASEVTNNKGNLEDRCLSCGKKNPVSFHPLFEGGLCQSCRDRFLELFYMYDEDGYQSYCTVCCEGRELLLCSNTSCCRCFCVECLEVLVGAGTAEDAKLQEPWSCYMCLPQRCHGVLRRRKDWNMRLQDFFTTDPDLEEFEPPKLYPAIPAAKRRPIRVLSLFDGIATGYLVLKELGIKVEKYIASEVCAESIAVGTVKHEGQIKYVNDVRKITKKNIEEWGPFDLVIGGSPCNDLSNVNPARKGLYEGTGRLFFEFYHLLNYTRPKEGDNRPFFWMFENVVAMKVNDKKDISRFLACNPVMIDAIKVSAAHRARYFWGNLPGMNRPVMASKNDKLELQDCLEFSRTAKLKKVQTITTKSNSIRQGKNQLFPVVMNGKDDVLWCTELERIFGFPAHYTDVSNMGRGARQKLLGRSWSVPVIRHLFAPLKDYFACE</sequence>
<organism>
    <name type="scientific">Mus musculus</name>
    <name type="common">Mouse</name>
    <dbReference type="NCBI Taxonomy" id="10090"/>
    <lineage>
        <taxon>Eukaryota</taxon>
        <taxon>Metazoa</taxon>
        <taxon>Chordata</taxon>
        <taxon>Craniata</taxon>
        <taxon>Vertebrata</taxon>
        <taxon>Euteleostomi</taxon>
        <taxon>Mammalia</taxon>
        <taxon>Eutheria</taxon>
        <taxon>Euarchontoglires</taxon>
        <taxon>Glires</taxon>
        <taxon>Rodentia</taxon>
        <taxon>Myomorpha</taxon>
        <taxon>Muroidea</taxon>
        <taxon>Muridae</taxon>
        <taxon>Murinae</taxon>
        <taxon>Mus</taxon>
        <taxon>Mus</taxon>
    </lineage>
</organism>
<feature type="chain" id="PRO_0000088046" description="DNA (cytosine-5)-methyltransferase 3B">
    <location>
        <begin position="1"/>
        <end position="859"/>
    </location>
</feature>
<feature type="domain" description="PWWP" evidence="4">
    <location>
        <begin position="232"/>
        <end position="290"/>
    </location>
</feature>
<feature type="domain" description="ADD" evidence="5">
    <location>
        <begin position="428"/>
        <end position="560"/>
    </location>
</feature>
<feature type="domain" description="SAM-dependent MTase C5-type" evidence="6">
    <location>
        <begin position="581"/>
        <end position="859"/>
    </location>
</feature>
<feature type="zinc finger region" description="GATA-type; atypical" evidence="5">
    <location>
        <begin position="439"/>
        <end position="469"/>
    </location>
</feature>
<feature type="zinc finger region" description="PHD-type; atypical" evidence="5">
    <location>
        <begin position="480"/>
        <end position="536"/>
    </location>
</feature>
<feature type="region of interest" description="Interaction with DNMT1 and DNMT3A" evidence="1">
    <location>
        <begin position="1"/>
        <end position="305"/>
    </location>
</feature>
<feature type="region of interest" description="Disordered" evidence="8">
    <location>
        <begin position="25"/>
        <end position="226"/>
    </location>
</feature>
<feature type="region of interest" description="Disordered" evidence="8">
    <location>
        <begin position="348"/>
        <end position="429"/>
    </location>
</feature>
<feature type="region of interest" description="Interaction with the PRC2/EED-EZH2 complex">
    <location>
        <begin position="440"/>
        <end position="532"/>
    </location>
</feature>
<feature type="compositionally biased region" description="Acidic residues" evidence="8">
    <location>
        <begin position="85"/>
        <end position="94"/>
    </location>
</feature>
<feature type="compositionally biased region" description="Basic and acidic residues" evidence="8">
    <location>
        <begin position="103"/>
        <end position="114"/>
    </location>
</feature>
<feature type="compositionally biased region" description="Low complexity" evidence="8">
    <location>
        <begin position="167"/>
        <end position="179"/>
    </location>
</feature>
<feature type="compositionally biased region" description="Polar residues" evidence="8">
    <location>
        <begin position="189"/>
        <end position="198"/>
    </location>
</feature>
<feature type="compositionally biased region" description="Basic and acidic residues" evidence="8">
    <location>
        <begin position="214"/>
        <end position="226"/>
    </location>
</feature>
<feature type="compositionally biased region" description="Basic and acidic residues" evidence="8">
    <location>
        <begin position="370"/>
        <end position="381"/>
    </location>
</feature>
<feature type="compositionally biased region" description="Basic and acidic residues" evidence="8">
    <location>
        <begin position="412"/>
        <end position="426"/>
    </location>
</feature>
<feature type="active site" evidence="6 7">
    <location>
        <position position="657"/>
    </location>
</feature>
<feature type="binding site" evidence="3">
    <location>
        <begin position="588"/>
        <end position="592"/>
    </location>
    <ligand>
        <name>S-adenosyl-L-methionine</name>
        <dbReference type="ChEBI" id="CHEBI:59789"/>
    </ligand>
</feature>
<feature type="binding site" evidence="3">
    <location>
        <position position="611"/>
    </location>
    <ligand>
        <name>S-adenosyl-L-methionine</name>
        <dbReference type="ChEBI" id="CHEBI:59789"/>
    </ligand>
</feature>
<feature type="binding site" evidence="3">
    <location>
        <begin position="633"/>
        <end position="635"/>
    </location>
    <ligand>
        <name>S-adenosyl-L-methionine</name>
        <dbReference type="ChEBI" id="CHEBI:59789"/>
    </ligand>
</feature>
<feature type="binding site" evidence="3">
    <location>
        <begin position="838"/>
        <end position="840"/>
    </location>
    <ligand>
        <name>S-adenosyl-L-methionine</name>
        <dbReference type="ChEBI" id="CHEBI:59789"/>
    </ligand>
</feature>
<feature type="modified residue" description="Phosphoserine" evidence="2">
    <location>
        <position position="96"/>
    </location>
</feature>
<feature type="modified residue" description="Phosphothreonine" evidence="2">
    <location>
        <position position="112"/>
    </location>
</feature>
<feature type="modified residue" description="Phosphoserine" evidence="2">
    <location>
        <position position="116"/>
    </location>
</feature>
<feature type="modified residue" description="Phosphoserine" evidence="2">
    <location>
        <position position="216"/>
    </location>
</feature>
<feature type="modified residue" description="Citrulline" evidence="22">
    <location>
        <position position="415"/>
    </location>
</feature>
<feature type="cross-link" description="Glycyl lysine isopeptide (Lys-Gly) (interchain with G-Cter in SUMO2)" evidence="2">
    <location>
        <position position="102"/>
    </location>
</feature>
<feature type="cross-link" description="Glycyl lysine isopeptide (Lys-Gly) (interchain with G-Cter in SUMO2)" evidence="2">
    <location>
        <position position="623"/>
    </location>
</feature>
<feature type="splice variant" id="VSP_005642" description="In isoform 2 and isoform 3." evidence="23 24">
    <location>
        <begin position="363"/>
        <end position="382"/>
    </location>
</feature>
<feature type="splice variant" id="VSP_005643" description="In isoform 3 and isoform 4." evidence="23 24">
    <location>
        <begin position="750"/>
        <end position="812"/>
    </location>
</feature>
<feature type="mutagenesis site" description="Prevents accumulation in pericentric heterochromatin." evidence="13">
    <original>VW</original>
    <variation>RR</variation>
    <location>
        <begin position="236"/>
        <end position="237"/>
    </location>
</feature>
<feature type="mutagenesis site" description="Prevents accumulation in pericentric heterochromatin." evidence="13">
    <original>S</original>
    <variation>P</variation>
    <location>
        <position position="277"/>
    </location>
</feature>
<feature type="mutagenesis site" description="Significantly reduces activity." evidence="11">
    <original>A</original>
    <variation>T</variation>
    <location>
        <position position="609"/>
    </location>
</feature>
<feature type="mutagenesis site" description="No effect on localization." evidence="13">
    <original>PC</original>
    <variation>GT</variation>
    <location>
        <begin position="656"/>
        <end position="657"/>
    </location>
</feature>
<feature type="mutagenesis site" description="Significantly reduces activity." evidence="11">
    <original>G</original>
    <variation>S</variation>
    <location>
        <position position="669"/>
    </location>
</feature>
<feature type="mutagenesis site" description="Significantly reduces activity." evidence="11">
    <original>L</original>
    <variation>T</variation>
    <location>
        <position position="670"/>
    </location>
</feature>
<feature type="mutagenesis site" description="Loss of activity." evidence="11">
    <original>V</original>
    <variation>G</variation>
    <location>
        <position position="725"/>
    </location>
</feature>
<feature type="mutagenesis site" description="Significantly reduces activity." evidence="11">
    <original>D</original>
    <variation>G</variation>
    <location>
        <position position="823"/>
    </location>
</feature>
<feature type="mutagenesis site" description="Significantly reduces activity." evidence="11">
    <original>V</original>
    <variation>M</variation>
    <location>
        <position position="824"/>
    </location>
</feature>
<feature type="sequence conflict" description="In Ref. 2; AAF74515/AAF74516." evidence="25" ref="2">
    <original>RD</original>
    <variation>IY</variation>
    <location>
        <begin position="217"/>
        <end position="218"/>
    </location>
</feature>
<feature type="strand" evidence="26">
    <location>
        <begin position="226"/>
        <end position="229"/>
    </location>
</feature>
<feature type="strand" evidence="26">
    <location>
        <begin position="235"/>
        <end position="240"/>
    </location>
</feature>
<feature type="turn" evidence="26">
    <location>
        <begin position="241"/>
        <end position="243"/>
    </location>
</feature>
<feature type="strand" evidence="26">
    <location>
        <begin position="244"/>
        <end position="251"/>
    </location>
</feature>
<feature type="helix" evidence="26">
    <location>
        <begin position="253"/>
        <end position="255"/>
    </location>
</feature>
<feature type="strand" evidence="26">
    <location>
        <begin position="265"/>
        <end position="270"/>
    </location>
</feature>
<feature type="turn" evidence="26">
    <location>
        <begin position="271"/>
        <end position="273"/>
    </location>
</feature>
<feature type="strand" evidence="26">
    <location>
        <begin position="276"/>
        <end position="280"/>
    </location>
</feature>
<feature type="helix" evidence="26">
    <location>
        <begin position="281"/>
        <end position="283"/>
    </location>
</feature>
<feature type="helix" evidence="26">
    <location>
        <begin position="290"/>
        <end position="293"/>
    </location>
</feature>
<feature type="helix" evidence="26">
    <location>
        <begin position="296"/>
        <end position="301"/>
    </location>
</feature>
<feature type="helix" evidence="26">
    <location>
        <begin position="303"/>
        <end position="320"/>
    </location>
</feature>
<feature type="helix" evidence="26">
    <location>
        <begin position="332"/>
        <end position="344"/>
    </location>
</feature>
<feature type="turn" evidence="26">
    <location>
        <begin position="348"/>
        <end position="350"/>
    </location>
</feature>
<feature type="helix" evidence="26">
    <location>
        <begin position="351"/>
        <end position="355"/>
    </location>
</feature>
<gene>
    <name type="primary">Dnmt3b</name>
</gene>
<comment type="function">
    <text evidence="1 2 9 10 11 17 18 19">Required for genome-wide de novo methylation and is essential for the establishment of DNA methylation patterns during development. DNA methylation is coordinated with methylation of histones. May preferentially methylates nucleosomal DNA within the nucleosome core region. May function as transcriptional co-repressor by associating with CBX4 and independently of DNA methylation. Seems to be involved in gene silencing. In association with DNMT1 and via the recruitment of CTCFL/BORIS, involved in activation of BAG1 gene expression by modulating dimethylation of promoter histone H3 at H3K4 and H3K9. Functions as a transcriptional corepressor by associating with ZHX1 (By similarity). Required for DUX4 silencing in somatic cells (By similarity).</text>
</comment>
<comment type="catalytic activity">
    <reaction evidence="7">
        <text>a 2'-deoxycytidine in DNA + S-adenosyl-L-methionine = a 5-methyl-2'-deoxycytidine in DNA + S-adenosyl-L-homocysteine + H(+)</text>
        <dbReference type="Rhea" id="RHEA:13681"/>
        <dbReference type="Rhea" id="RHEA-COMP:11369"/>
        <dbReference type="Rhea" id="RHEA-COMP:11370"/>
        <dbReference type="ChEBI" id="CHEBI:15378"/>
        <dbReference type="ChEBI" id="CHEBI:57856"/>
        <dbReference type="ChEBI" id="CHEBI:59789"/>
        <dbReference type="ChEBI" id="CHEBI:85452"/>
        <dbReference type="ChEBI" id="CHEBI:85454"/>
        <dbReference type="EC" id="2.1.1.37"/>
    </reaction>
</comment>
<comment type="activity regulation">
    <text evidence="14">Activated by binding to the regulatory factor DNMT3L.</text>
</comment>
<comment type="subunit">
    <text evidence="1 10 12 15 16 19 21">Interacts with CBX4, DNMT1, DNMT3A, SETDB1, UBE2I9, UBL1 and ZHX1 (By similarity). Interacts with SUV39H1 and BAZ2A/TIP5. Interacts with the PRC2/EED-EZH2 complex. Interacts with UHRF1.</text>
</comment>
<comment type="interaction">
    <interactant intactId="EBI-7987547">
        <id>O88509</id>
    </interactant>
    <interactant intactId="EBI-927401">
        <id>P25916</id>
        <label>Bmi1</label>
    </interactant>
    <organismsDiffer>false</organismsDiffer>
    <experiments>2</experiments>
</comment>
<comment type="interaction">
    <interactant intactId="EBI-7987547">
        <id>O88509</id>
    </interactant>
    <interactant intactId="EBI-3043871">
        <id>Q9CWR8</id>
        <label>Dnmt3l</label>
    </interactant>
    <organismsDiffer>false</organismsDiffer>
    <experiments>6</experiments>
</comment>
<comment type="interaction">
    <interactant intactId="EBI-7987547">
        <id>O88509</id>
    </interactant>
    <interactant intactId="EBI-15737169">
        <id>Q9Z148-2</id>
        <label>Ehmt2</label>
    </interactant>
    <organismsDiffer>false</organismsDiffer>
    <experiments>3</experiments>
</comment>
<comment type="interaction">
    <interactant intactId="EBI-7987547">
        <id>O88509</id>
    </interactant>
    <interactant intactId="EBI-3043887">
        <id>Q60848</id>
        <label>Hells</label>
    </interactant>
    <organismsDiffer>false</organismsDiffer>
    <experiments>4</experiments>
</comment>
<comment type="subcellular location">
    <subcellularLocation>
        <location evidence="13">Nucleus</location>
    </subcellularLocation>
    <text>Accumulates in the major satellite repeats at pericentric heterochromatin.</text>
</comment>
<comment type="alternative products">
    <event type="alternative splicing"/>
    <isoform>
        <id>O88509-1</id>
        <name>1</name>
        <name>5</name>
        <sequence type="displayed"/>
    </isoform>
    <isoform>
        <id>O88509-2</id>
        <name>2</name>
        <name>6</name>
        <sequence type="described" ref="VSP_005642"/>
    </isoform>
    <isoform>
        <id>O88509-3</id>
        <name>3</name>
        <name>8</name>
        <sequence type="described" ref="VSP_005642 VSP_005643"/>
    </isoform>
    <isoform>
        <id>O88509-4</id>
        <name>4</name>
        <name>7</name>
        <sequence type="described" ref="VSP_005643"/>
    </isoform>
</comment>
<comment type="developmental stage">
    <text evidence="9 20">Expressed in almost all blastocysts at 3.0 dpc. Preferentially expressed in the trophectoderm (TE) in 3.5 dpc and polar TE in 4.0 dpc blastocysts. In 4.5 dpc embryos, expressed in the polar TE and some inner cell mass (ICM) embryonic lineage cells. In post-implantation embryo at 5.5 dpc, expressed in the epiblast (embryonic lineage) derived from the ICM. Highly expressed, at 7.5 dpc, in the embryonic ectoderm, neural ectoderm, and chorionic ectoderm; a weak expression is also detected in mesodermal and endodermal cells. At later stages, the expression is detected predominantly in the forebrain and eyes but weakly throughout the embryo.</text>
</comment>
<comment type="domain">
    <text>The PWWP domain is essential for targeting to pericentric heterochromatin.</text>
</comment>
<comment type="PTM">
    <text evidence="1">Sumoylated.</text>
</comment>
<comment type="PTM">
    <text evidence="22">Citrullinated by PADI4.</text>
</comment>
<comment type="similarity">
    <text evidence="6">Belongs to the class I-like SAM-binding methyltransferase superfamily. C5-methyltransferase family.</text>
</comment>
<name>DNM3B_MOUSE</name>
<proteinExistence type="evidence at protein level"/>